<sequence length="244" mass="28391">MMRTQCLLGLRTFVAFAAKLWSFFIYLLRRQIRTVIQYQTVRYDILPLSPLSRNRLAQVKRKILVLDLDETLIHSHHDGVLRPTVRPGTPPDFILKVVIDKHPVRFFVHKRPHVDFFLEVVSQWYELVVFTASMEIYGSAVADKLDNSRSILKRRYYRQHCTLELGSYIKDLSVVHSDLSSIVILDNSPGAYRSHPDNAIPIKSWFSDPSDTALLNLLPMLDALRFTADVRSVLSRNLHQHRLW</sequence>
<organism>
    <name type="scientific">Mus musculus</name>
    <name type="common">Mouse</name>
    <dbReference type="NCBI Taxonomy" id="10090"/>
    <lineage>
        <taxon>Eukaryota</taxon>
        <taxon>Metazoa</taxon>
        <taxon>Chordata</taxon>
        <taxon>Craniata</taxon>
        <taxon>Vertebrata</taxon>
        <taxon>Euteleostomi</taxon>
        <taxon>Mammalia</taxon>
        <taxon>Eutheria</taxon>
        <taxon>Euarchontoglires</taxon>
        <taxon>Glires</taxon>
        <taxon>Rodentia</taxon>
        <taxon>Myomorpha</taxon>
        <taxon>Muroidea</taxon>
        <taxon>Muridae</taxon>
        <taxon>Murinae</taxon>
        <taxon>Mus</taxon>
        <taxon>Mus</taxon>
    </lineage>
</organism>
<dbReference type="EC" id="3.1.3.16"/>
<dbReference type="EMBL" id="AK164602">
    <property type="protein sequence ID" value="BAE37845.1"/>
    <property type="molecule type" value="mRNA"/>
</dbReference>
<dbReference type="EMBL" id="AL596185">
    <property type="status" value="NOT_ANNOTATED_CDS"/>
    <property type="molecule type" value="Genomic_DNA"/>
</dbReference>
<dbReference type="EMBL" id="BC018265">
    <property type="protein sequence ID" value="AAH18265.1"/>
    <property type="molecule type" value="mRNA"/>
</dbReference>
<dbReference type="CCDS" id="CCDS24927.1"/>
<dbReference type="RefSeq" id="NP_080293.1">
    <property type="nucleotide sequence ID" value="NM_026017.2"/>
</dbReference>
<dbReference type="SMR" id="Q3TP92"/>
<dbReference type="BioGRID" id="211999">
    <property type="interactions" value="4"/>
</dbReference>
<dbReference type="FunCoup" id="Q3TP92">
    <property type="interactions" value="4116"/>
</dbReference>
<dbReference type="STRING" id="10090.ENSMUSP00000104234"/>
<dbReference type="iPTMnet" id="Q3TP92"/>
<dbReference type="PhosphoSitePlus" id="Q3TP92"/>
<dbReference type="SwissPalm" id="Q3TP92"/>
<dbReference type="PaxDb" id="10090-ENSMUSP00000104234"/>
<dbReference type="PeptideAtlas" id="Q3TP92"/>
<dbReference type="ProteomicsDB" id="283867"/>
<dbReference type="Pumba" id="Q3TP92"/>
<dbReference type="Antibodypedia" id="23976">
    <property type="antibodies" value="143 antibodies from 22 providers"/>
</dbReference>
<dbReference type="Ensembl" id="ENSMUST00000108593.8">
    <property type="protein sequence ID" value="ENSMUSP00000104234.2"/>
    <property type="gene ID" value="ENSMUSG00000018559.17"/>
</dbReference>
<dbReference type="GeneID" id="67181"/>
<dbReference type="KEGG" id="mmu:67181"/>
<dbReference type="UCSC" id="uc007jtf.1">
    <property type="organism name" value="mouse"/>
</dbReference>
<dbReference type="AGR" id="MGI:1914431"/>
<dbReference type="CTD" id="23399"/>
<dbReference type="MGI" id="MGI:1914431">
    <property type="gene designation" value="Ctdnep1"/>
</dbReference>
<dbReference type="VEuPathDB" id="HostDB:ENSMUSG00000018559"/>
<dbReference type="eggNOG" id="KOG1605">
    <property type="taxonomic scope" value="Eukaryota"/>
</dbReference>
<dbReference type="GeneTree" id="ENSGT01040000240503"/>
<dbReference type="HOGENOM" id="CLU_020262_4_3_1"/>
<dbReference type="InParanoid" id="Q3TP92"/>
<dbReference type="OMA" id="RIWGFFM"/>
<dbReference type="OrthoDB" id="277011at2759"/>
<dbReference type="PhylomeDB" id="Q3TP92"/>
<dbReference type="TreeFam" id="TF313962"/>
<dbReference type="Reactome" id="R-MMU-4419969">
    <property type="pathway name" value="Depolymerization of the Nuclear Lamina"/>
</dbReference>
<dbReference type="BioGRID-ORCS" id="67181">
    <property type="hits" value="11 hits in 80 CRISPR screens"/>
</dbReference>
<dbReference type="ChiTaRS" id="Ctdnep1">
    <property type="organism name" value="mouse"/>
</dbReference>
<dbReference type="PRO" id="PR:Q3TP92"/>
<dbReference type="Proteomes" id="UP000000589">
    <property type="component" value="Chromosome 11"/>
</dbReference>
<dbReference type="RNAct" id="Q3TP92">
    <property type="molecule type" value="protein"/>
</dbReference>
<dbReference type="Bgee" id="ENSMUSG00000018559">
    <property type="expression patterns" value="Expressed in hindlimb stylopod muscle and 249 other cell types or tissues"/>
</dbReference>
<dbReference type="ExpressionAtlas" id="Q3TP92">
    <property type="expression patterns" value="baseline and differential"/>
</dbReference>
<dbReference type="GO" id="GO:0005737">
    <property type="term" value="C:cytoplasm"/>
    <property type="evidence" value="ECO:0000314"/>
    <property type="project" value="MGI"/>
</dbReference>
<dbReference type="GO" id="GO:0005789">
    <property type="term" value="C:endoplasmic reticulum membrane"/>
    <property type="evidence" value="ECO:0000250"/>
    <property type="project" value="UniProtKB"/>
</dbReference>
<dbReference type="GO" id="GO:0005811">
    <property type="term" value="C:lipid droplet"/>
    <property type="evidence" value="ECO:0007669"/>
    <property type="project" value="Ensembl"/>
</dbReference>
<dbReference type="GO" id="GO:0071595">
    <property type="term" value="C:Nem1-Spo7 phosphatase complex"/>
    <property type="evidence" value="ECO:0000250"/>
    <property type="project" value="UniProtKB"/>
</dbReference>
<dbReference type="GO" id="GO:0005635">
    <property type="term" value="C:nuclear envelope"/>
    <property type="evidence" value="ECO:0000250"/>
    <property type="project" value="UniProtKB"/>
</dbReference>
<dbReference type="GO" id="GO:0031965">
    <property type="term" value="C:nuclear membrane"/>
    <property type="evidence" value="ECO:0000250"/>
    <property type="project" value="UniProtKB"/>
</dbReference>
<dbReference type="GO" id="GO:0005634">
    <property type="term" value="C:nucleus"/>
    <property type="evidence" value="ECO:0000314"/>
    <property type="project" value="MGI"/>
</dbReference>
<dbReference type="GO" id="GO:0004721">
    <property type="term" value="F:phosphoprotein phosphatase activity"/>
    <property type="evidence" value="ECO:0000250"/>
    <property type="project" value="UniProtKB"/>
</dbReference>
<dbReference type="GO" id="GO:0004722">
    <property type="term" value="F:protein serine/threonine phosphatase activity"/>
    <property type="evidence" value="ECO:0000250"/>
    <property type="project" value="UniProtKB"/>
</dbReference>
<dbReference type="GO" id="GO:0060070">
    <property type="term" value="P:canonical Wnt signaling pathway"/>
    <property type="evidence" value="ECO:0000315"/>
    <property type="project" value="MGI"/>
</dbReference>
<dbReference type="GO" id="GO:0007276">
    <property type="term" value="P:gamete generation"/>
    <property type="evidence" value="ECO:0000315"/>
    <property type="project" value="MGI"/>
</dbReference>
<dbReference type="GO" id="GO:0007498">
    <property type="term" value="P:mesoderm development"/>
    <property type="evidence" value="ECO:0000315"/>
    <property type="project" value="MGI"/>
</dbReference>
<dbReference type="GO" id="GO:0006998">
    <property type="term" value="P:nuclear envelope organization"/>
    <property type="evidence" value="ECO:0000250"/>
    <property type="project" value="UniProtKB"/>
</dbReference>
<dbReference type="GO" id="GO:0090263">
    <property type="term" value="P:positive regulation of canonical Wnt signaling pathway"/>
    <property type="evidence" value="ECO:0000315"/>
    <property type="project" value="MGI"/>
</dbReference>
<dbReference type="GO" id="GO:0010867">
    <property type="term" value="P:positive regulation of triglyceride biosynthetic process"/>
    <property type="evidence" value="ECO:0000250"/>
    <property type="project" value="UniProtKB"/>
</dbReference>
<dbReference type="GO" id="GO:0034504">
    <property type="term" value="P:protein localization to nucleus"/>
    <property type="evidence" value="ECO:0000250"/>
    <property type="project" value="UniProtKB"/>
</dbReference>
<dbReference type="CDD" id="cd07521">
    <property type="entry name" value="HAD_FCP1-like"/>
    <property type="match status" value="1"/>
</dbReference>
<dbReference type="FunFam" id="3.40.50.1000:FF:000044">
    <property type="entry name" value="CTD nuclear envelope phosphatase 1"/>
    <property type="match status" value="1"/>
</dbReference>
<dbReference type="Gene3D" id="3.40.50.1000">
    <property type="entry name" value="HAD superfamily/HAD-like"/>
    <property type="match status" value="1"/>
</dbReference>
<dbReference type="InterPro" id="IPR011948">
    <property type="entry name" value="Dullard_phosphatase"/>
</dbReference>
<dbReference type="InterPro" id="IPR004274">
    <property type="entry name" value="FCP1_dom"/>
</dbReference>
<dbReference type="InterPro" id="IPR036412">
    <property type="entry name" value="HAD-like_sf"/>
</dbReference>
<dbReference type="InterPro" id="IPR023214">
    <property type="entry name" value="HAD_sf"/>
</dbReference>
<dbReference type="InterPro" id="IPR050365">
    <property type="entry name" value="TIM50"/>
</dbReference>
<dbReference type="NCBIfam" id="TIGR02251">
    <property type="entry name" value="HIF-SF_euk"/>
    <property type="match status" value="1"/>
</dbReference>
<dbReference type="PANTHER" id="PTHR12210">
    <property type="entry name" value="DULLARD PROTEIN PHOSPHATASE"/>
    <property type="match status" value="1"/>
</dbReference>
<dbReference type="Pfam" id="PF03031">
    <property type="entry name" value="NIF"/>
    <property type="match status" value="1"/>
</dbReference>
<dbReference type="SMART" id="SM00577">
    <property type="entry name" value="CPDc"/>
    <property type="match status" value="1"/>
</dbReference>
<dbReference type="SUPFAM" id="SSF56784">
    <property type="entry name" value="HAD-like"/>
    <property type="match status" value="1"/>
</dbReference>
<dbReference type="PROSITE" id="PS50969">
    <property type="entry name" value="FCP1"/>
    <property type="match status" value="1"/>
</dbReference>
<evidence type="ECO:0000250" key="1"/>
<evidence type="ECO:0000255" key="2"/>
<evidence type="ECO:0000255" key="3">
    <source>
        <dbReference type="PROSITE-ProRule" id="PRU00336"/>
    </source>
</evidence>
<evidence type="ECO:0000269" key="4">
    <source>
    </source>
</evidence>
<evidence type="ECO:0000305" key="5"/>
<feature type="chain" id="PRO_0000297968" description="CTD nuclear envelope phosphatase 1">
    <location>
        <begin position="1"/>
        <end position="244"/>
    </location>
</feature>
<feature type="transmembrane region" description="Helical" evidence="2">
    <location>
        <begin position="7"/>
        <end position="29"/>
    </location>
</feature>
<feature type="domain" description="FCP1 homology" evidence="3">
    <location>
        <begin position="57"/>
        <end position="224"/>
    </location>
</feature>
<feature type="sequence conflict" description="In Ref. 1; BAE37845." evidence="5" ref="1">
    <original>A</original>
    <variation>S</variation>
    <location>
        <position position="213"/>
    </location>
</feature>
<keyword id="KW-0256">Endoplasmic reticulum</keyword>
<keyword id="KW-0378">Hydrolase</keyword>
<keyword id="KW-0472">Membrane</keyword>
<keyword id="KW-0539">Nucleus</keyword>
<keyword id="KW-0904">Protein phosphatase</keyword>
<keyword id="KW-1185">Reference proteome</keyword>
<keyword id="KW-0812">Transmembrane</keyword>
<keyword id="KW-1133">Transmembrane helix</keyword>
<reference key="1">
    <citation type="journal article" date="2005" name="Science">
        <title>The transcriptional landscape of the mammalian genome.</title>
        <authorList>
            <person name="Carninci P."/>
            <person name="Kasukawa T."/>
            <person name="Katayama S."/>
            <person name="Gough J."/>
            <person name="Frith M.C."/>
            <person name="Maeda N."/>
            <person name="Oyama R."/>
            <person name="Ravasi T."/>
            <person name="Lenhard B."/>
            <person name="Wells C."/>
            <person name="Kodzius R."/>
            <person name="Shimokawa K."/>
            <person name="Bajic V.B."/>
            <person name="Brenner S.E."/>
            <person name="Batalov S."/>
            <person name="Forrest A.R."/>
            <person name="Zavolan M."/>
            <person name="Davis M.J."/>
            <person name="Wilming L.G."/>
            <person name="Aidinis V."/>
            <person name="Allen J.E."/>
            <person name="Ambesi-Impiombato A."/>
            <person name="Apweiler R."/>
            <person name="Aturaliya R.N."/>
            <person name="Bailey T.L."/>
            <person name="Bansal M."/>
            <person name="Baxter L."/>
            <person name="Beisel K.W."/>
            <person name="Bersano T."/>
            <person name="Bono H."/>
            <person name="Chalk A.M."/>
            <person name="Chiu K.P."/>
            <person name="Choudhary V."/>
            <person name="Christoffels A."/>
            <person name="Clutterbuck D.R."/>
            <person name="Crowe M.L."/>
            <person name="Dalla E."/>
            <person name="Dalrymple B.P."/>
            <person name="de Bono B."/>
            <person name="Della Gatta G."/>
            <person name="di Bernardo D."/>
            <person name="Down T."/>
            <person name="Engstrom P."/>
            <person name="Fagiolini M."/>
            <person name="Faulkner G."/>
            <person name="Fletcher C.F."/>
            <person name="Fukushima T."/>
            <person name="Furuno M."/>
            <person name="Futaki S."/>
            <person name="Gariboldi M."/>
            <person name="Georgii-Hemming P."/>
            <person name="Gingeras T.R."/>
            <person name="Gojobori T."/>
            <person name="Green R.E."/>
            <person name="Gustincich S."/>
            <person name="Harbers M."/>
            <person name="Hayashi Y."/>
            <person name="Hensch T.K."/>
            <person name="Hirokawa N."/>
            <person name="Hill D."/>
            <person name="Huminiecki L."/>
            <person name="Iacono M."/>
            <person name="Ikeo K."/>
            <person name="Iwama A."/>
            <person name="Ishikawa T."/>
            <person name="Jakt M."/>
            <person name="Kanapin A."/>
            <person name="Katoh M."/>
            <person name="Kawasawa Y."/>
            <person name="Kelso J."/>
            <person name="Kitamura H."/>
            <person name="Kitano H."/>
            <person name="Kollias G."/>
            <person name="Krishnan S.P."/>
            <person name="Kruger A."/>
            <person name="Kummerfeld S.K."/>
            <person name="Kurochkin I.V."/>
            <person name="Lareau L.F."/>
            <person name="Lazarevic D."/>
            <person name="Lipovich L."/>
            <person name="Liu J."/>
            <person name="Liuni S."/>
            <person name="McWilliam S."/>
            <person name="Madan Babu M."/>
            <person name="Madera M."/>
            <person name="Marchionni L."/>
            <person name="Matsuda H."/>
            <person name="Matsuzawa S."/>
            <person name="Miki H."/>
            <person name="Mignone F."/>
            <person name="Miyake S."/>
            <person name="Morris K."/>
            <person name="Mottagui-Tabar S."/>
            <person name="Mulder N."/>
            <person name="Nakano N."/>
            <person name="Nakauchi H."/>
            <person name="Ng P."/>
            <person name="Nilsson R."/>
            <person name="Nishiguchi S."/>
            <person name="Nishikawa S."/>
            <person name="Nori F."/>
            <person name="Ohara O."/>
            <person name="Okazaki Y."/>
            <person name="Orlando V."/>
            <person name="Pang K.C."/>
            <person name="Pavan W.J."/>
            <person name="Pavesi G."/>
            <person name="Pesole G."/>
            <person name="Petrovsky N."/>
            <person name="Piazza S."/>
            <person name="Reed J."/>
            <person name="Reid J.F."/>
            <person name="Ring B.Z."/>
            <person name="Ringwald M."/>
            <person name="Rost B."/>
            <person name="Ruan Y."/>
            <person name="Salzberg S.L."/>
            <person name="Sandelin A."/>
            <person name="Schneider C."/>
            <person name="Schoenbach C."/>
            <person name="Sekiguchi K."/>
            <person name="Semple C.A."/>
            <person name="Seno S."/>
            <person name="Sessa L."/>
            <person name="Sheng Y."/>
            <person name="Shibata Y."/>
            <person name="Shimada H."/>
            <person name="Shimada K."/>
            <person name="Silva D."/>
            <person name="Sinclair B."/>
            <person name="Sperling S."/>
            <person name="Stupka E."/>
            <person name="Sugiura K."/>
            <person name="Sultana R."/>
            <person name="Takenaka Y."/>
            <person name="Taki K."/>
            <person name="Tammoja K."/>
            <person name="Tan S.L."/>
            <person name="Tang S."/>
            <person name="Taylor M.S."/>
            <person name="Tegner J."/>
            <person name="Teichmann S.A."/>
            <person name="Ueda H.R."/>
            <person name="van Nimwegen E."/>
            <person name="Verardo R."/>
            <person name="Wei C.L."/>
            <person name="Yagi K."/>
            <person name="Yamanishi H."/>
            <person name="Zabarovsky E."/>
            <person name="Zhu S."/>
            <person name="Zimmer A."/>
            <person name="Hide W."/>
            <person name="Bult C."/>
            <person name="Grimmond S.M."/>
            <person name="Teasdale R.D."/>
            <person name="Liu E.T."/>
            <person name="Brusic V."/>
            <person name="Quackenbush J."/>
            <person name="Wahlestedt C."/>
            <person name="Mattick J.S."/>
            <person name="Hume D.A."/>
            <person name="Kai C."/>
            <person name="Sasaki D."/>
            <person name="Tomaru Y."/>
            <person name="Fukuda S."/>
            <person name="Kanamori-Katayama M."/>
            <person name="Suzuki M."/>
            <person name="Aoki J."/>
            <person name="Arakawa T."/>
            <person name="Iida J."/>
            <person name="Imamura K."/>
            <person name="Itoh M."/>
            <person name="Kato T."/>
            <person name="Kawaji H."/>
            <person name="Kawagashira N."/>
            <person name="Kawashima T."/>
            <person name="Kojima M."/>
            <person name="Kondo S."/>
            <person name="Konno H."/>
            <person name="Nakano K."/>
            <person name="Ninomiya N."/>
            <person name="Nishio T."/>
            <person name="Okada M."/>
            <person name="Plessy C."/>
            <person name="Shibata K."/>
            <person name="Shiraki T."/>
            <person name="Suzuki S."/>
            <person name="Tagami M."/>
            <person name="Waki K."/>
            <person name="Watahiki A."/>
            <person name="Okamura-Oho Y."/>
            <person name="Suzuki H."/>
            <person name="Kawai J."/>
            <person name="Hayashizaki Y."/>
        </authorList>
    </citation>
    <scope>NUCLEOTIDE SEQUENCE [LARGE SCALE MRNA]</scope>
    <source>
        <strain>C57BL/6J</strain>
        <tissue>Lung</tissue>
    </source>
</reference>
<reference key="2">
    <citation type="journal article" date="2009" name="PLoS Biol.">
        <title>Lineage-specific biology revealed by a finished genome assembly of the mouse.</title>
        <authorList>
            <person name="Church D.M."/>
            <person name="Goodstadt L."/>
            <person name="Hillier L.W."/>
            <person name="Zody M.C."/>
            <person name="Goldstein S."/>
            <person name="She X."/>
            <person name="Bult C.J."/>
            <person name="Agarwala R."/>
            <person name="Cherry J.L."/>
            <person name="DiCuccio M."/>
            <person name="Hlavina W."/>
            <person name="Kapustin Y."/>
            <person name="Meric P."/>
            <person name="Maglott D."/>
            <person name="Birtle Z."/>
            <person name="Marques A.C."/>
            <person name="Graves T."/>
            <person name="Zhou S."/>
            <person name="Teague B."/>
            <person name="Potamousis K."/>
            <person name="Churas C."/>
            <person name="Place M."/>
            <person name="Herschleb J."/>
            <person name="Runnheim R."/>
            <person name="Forrest D."/>
            <person name="Amos-Landgraf J."/>
            <person name="Schwartz D.C."/>
            <person name="Cheng Z."/>
            <person name="Lindblad-Toh K."/>
            <person name="Eichler E.E."/>
            <person name="Ponting C.P."/>
        </authorList>
    </citation>
    <scope>NUCLEOTIDE SEQUENCE [LARGE SCALE GENOMIC DNA]</scope>
    <source>
        <strain>C57BL/6J</strain>
    </source>
</reference>
<reference key="3">
    <citation type="journal article" date="2004" name="Genome Res.">
        <title>The status, quality, and expansion of the NIH full-length cDNA project: the Mammalian Gene Collection (MGC).</title>
        <authorList>
            <consortium name="The MGC Project Team"/>
        </authorList>
    </citation>
    <scope>NUCLEOTIDE SEQUENCE [LARGE SCALE MRNA]</scope>
    <source>
        <strain>FVB/N</strain>
        <tissue>Mammary tumor</tissue>
    </source>
</reference>
<reference key="4">
    <citation type="journal article" date="2002" name="Biochem. Biophys. Res. Commun.">
        <title>Molecular cloning and characterization of dullard: a novel gene required for neural development.</title>
        <authorList>
            <person name="Satow R."/>
            <person name="Chan T.C."/>
            <person name="Asashima M."/>
        </authorList>
    </citation>
    <scope>IDENTIFICATION</scope>
</reference>
<reference key="5">
    <citation type="journal article" date="2010" name="Cell">
        <title>A tissue-specific atlas of mouse protein phosphorylation and expression.</title>
        <authorList>
            <person name="Huttlin E.L."/>
            <person name="Jedrychowski M.P."/>
            <person name="Elias J.E."/>
            <person name="Goswami T."/>
            <person name="Rad R."/>
            <person name="Beausoleil S.A."/>
            <person name="Villen J."/>
            <person name="Haas W."/>
            <person name="Sowa M.E."/>
            <person name="Gygi S.P."/>
        </authorList>
    </citation>
    <scope>IDENTIFICATION BY MASS SPECTROMETRY [LARGE SCALE ANALYSIS]</scope>
    <source>
        <tissue>Spleen</tissue>
    </source>
</reference>
<reference key="6">
    <citation type="journal article" date="2012" name="J. Biol. Chem.">
        <title>Nuclear envelope phosphatase-regulatory subunit 1 (formerly TMEM188) is the metazoan SPO7 ortholog and functions in the lipin activation pathway.</title>
        <authorList>
            <person name="Han S."/>
            <person name="Bahmanyar S."/>
            <person name="Zhang P."/>
            <person name="Grishin N."/>
            <person name="Oegema K."/>
            <person name="Crooke R."/>
            <person name="Graham M."/>
            <person name="Reue K."/>
            <person name="Dixon J.E."/>
            <person name="Goodman J.M."/>
        </authorList>
    </citation>
    <scope>TISSUE SPECIFICITY</scope>
</reference>
<name>CNEP1_MOUSE</name>
<proteinExistence type="evidence at protein level"/>
<comment type="function">
    <text evidence="1">Serine/threonine protein phosphatase forming with CNEP1R1 an active phosphatase complex that dephosphorylates and may activate LPIN1 and LPIN2. LPIN1 and LPIN2 are phosphatidate phosphatases that catalyze the conversion of phosphatidic acid to diacylglycerol and control the metabolism of fatty acids at different levels. May indirectly modulate the lipid composition of nuclear and/or endoplasmic reticulum membranes and be required for proper nuclear membrane morphology and/or dynamics. May also indirectly regulate the production of lipid droplets and triacylglycerol. May antagonize BMP signaling (By similarity).</text>
</comment>
<comment type="catalytic activity">
    <reaction>
        <text>O-phospho-L-seryl-[protein] + H2O = L-seryl-[protein] + phosphate</text>
        <dbReference type="Rhea" id="RHEA:20629"/>
        <dbReference type="Rhea" id="RHEA-COMP:9863"/>
        <dbReference type="Rhea" id="RHEA-COMP:11604"/>
        <dbReference type="ChEBI" id="CHEBI:15377"/>
        <dbReference type="ChEBI" id="CHEBI:29999"/>
        <dbReference type="ChEBI" id="CHEBI:43474"/>
        <dbReference type="ChEBI" id="CHEBI:83421"/>
        <dbReference type="EC" id="3.1.3.16"/>
    </reaction>
</comment>
<comment type="catalytic activity">
    <reaction>
        <text>O-phospho-L-threonyl-[protein] + H2O = L-threonyl-[protein] + phosphate</text>
        <dbReference type="Rhea" id="RHEA:47004"/>
        <dbReference type="Rhea" id="RHEA-COMP:11060"/>
        <dbReference type="Rhea" id="RHEA-COMP:11605"/>
        <dbReference type="ChEBI" id="CHEBI:15377"/>
        <dbReference type="ChEBI" id="CHEBI:30013"/>
        <dbReference type="ChEBI" id="CHEBI:43474"/>
        <dbReference type="ChEBI" id="CHEBI:61977"/>
        <dbReference type="EC" id="3.1.3.16"/>
    </reaction>
</comment>
<comment type="subunit">
    <text evidence="1">Interacts with CNEP1R1; the complex dephosphorylates LPIN1 and LPIN2.</text>
</comment>
<comment type="subcellular location">
    <subcellularLocation>
        <location evidence="1">Endoplasmic reticulum membrane</location>
        <topology evidence="1">Single-pass membrane protein</topology>
    </subcellularLocation>
    <subcellularLocation>
        <location evidence="1">Nucleus membrane</location>
        <topology evidence="1">Single-pass membrane protein</topology>
    </subcellularLocation>
</comment>
<comment type="tissue specificity">
    <text evidence="4">Muscle specific with lower expression in other metabolic tissues.</text>
</comment>
<comment type="similarity">
    <text evidence="5">Belongs to the dullard family.</text>
</comment>
<gene>
    <name type="primary">Ctdnep1</name>
    <name type="synonym">Dullard</name>
</gene>
<protein>
    <recommendedName>
        <fullName>CTD nuclear envelope phosphatase 1</fullName>
        <ecNumber>3.1.3.16</ecNumber>
    </recommendedName>
    <alternativeName>
        <fullName>Serine/threonine-protein phosphatase dullard</fullName>
    </alternativeName>
</protein>
<accession>Q3TP92</accession>
<accession>Q5NCW4</accession>
<accession>Q8VEL4</accession>